<feature type="chain" id="PRO_1000132983" description="Enolase">
    <location>
        <begin position="1"/>
        <end position="431"/>
    </location>
</feature>
<feature type="active site" description="Proton donor" evidence="1">
    <location>
        <position position="205"/>
    </location>
</feature>
<feature type="active site" description="Proton acceptor" evidence="1">
    <location>
        <position position="340"/>
    </location>
</feature>
<feature type="binding site" evidence="1">
    <location>
        <position position="163"/>
    </location>
    <ligand>
        <name>(2R)-2-phosphoglycerate</name>
        <dbReference type="ChEBI" id="CHEBI:58289"/>
    </ligand>
</feature>
<feature type="binding site" evidence="1">
    <location>
        <position position="242"/>
    </location>
    <ligand>
        <name>Mg(2+)</name>
        <dbReference type="ChEBI" id="CHEBI:18420"/>
    </ligand>
</feature>
<feature type="binding site" evidence="1">
    <location>
        <position position="288"/>
    </location>
    <ligand>
        <name>Mg(2+)</name>
        <dbReference type="ChEBI" id="CHEBI:18420"/>
    </ligand>
</feature>
<feature type="binding site" evidence="1">
    <location>
        <position position="315"/>
    </location>
    <ligand>
        <name>Mg(2+)</name>
        <dbReference type="ChEBI" id="CHEBI:18420"/>
    </ligand>
</feature>
<feature type="binding site" evidence="1">
    <location>
        <position position="340"/>
    </location>
    <ligand>
        <name>(2R)-2-phosphoglycerate</name>
        <dbReference type="ChEBI" id="CHEBI:58289"/>
    </ligand>
</feature>
<feature type="binding site" evidence="1">
    <location>
        <position position="369"/>
    </location>
    <ligand>
        <name>(2R)-2-phosphoglycerate</name>
        <dbReference type="ChEBI" id="CHEBI:58289"/>
    </ligand>
</feature>
<feature type="binding site" evidence="1">
    <location>
        <position position="370"/>
    </location>
    <ligand>
        <name>(2R)-2-phosphoglycerate</name>
        <dbReference type="ChEBI" id="CHEBI:58289"/>
    </ligand>
</feature>
<feature type="binding site" evidence="1">
    <location>
        <position position="391"/>
    </location>
    <ligand>
        <name>(2R)-2-phosphoglycerate</name>
        <dbReference type="ChEBI" id="CHEBI:58289"/>
    </ligand>
</feature>
<keyword id="KW-0963">Cytoplasm</keyword>
<keyword id="KW-0324">Glycolysis</keyword>
<keyword id="KW-0456">Lyase</keyword>
<keyword id="KW-0460">Magnesium</keyword>
<keyword id="KW-0479">Metal-binding</keyword>
<keyword id="KW-0964">Secreted</keyword>
<evidence type="ECO:0000255" key="1">
    <source>
        <dbReference type="HAMAP-Rule" id="MF_00318"/>
    </source>
</evidence>
<comment type="function">
    <text evidence="1">Catalyzes the reversible conversion of 2-phosphoglycerate (2-PG) into phosphoenolpyruvate (PEP). It is essential for the degradation of carbohydrates via glycolysis.</text>
</comment>
<comment type="catalytic activity">
    <reaction evidence="1">
        <text>(2R)-2-phosphoglycerate = phosphoenolpyruvate + H2O</text>
        <dbReference type="Rhea" id="RHEA:10164"/>
        <dbReference type="ChEBI" id="CHEBI:15377"/>
        <dbReference type="ChEBI" id="CHEBI:58289"/>
        <dbReference type="ChEBI" id="CHEBI:58702"/>
        <dbReference type="EC" id="4.2.1.11"/>
    </reaction>
</comment>
<comment type="cofactor">
    <cofactor evidence="1">
        <name>Mg(2+)</name>
        <dbReference type="ChEBI" id="CHEBI:18420"/>
    </cofactor>
    <text evidence="1">Binds a second Mg(2+) ion via substrate during catalysis.</text>
</comment>
<comment type="pathway">
    <text evidence="1">Carbohydrate degradation; glycolysis; pyruvate from D-glyceraldehyde 3-phosphate: step 4/5.</text>
</comment>
<comment type="subcellular location">
    <subcellularLocation>
        <location evidence="1">Cytoplasm</location>
    </subcellularLocation>
    <subcellularLocation>
        <location evidence="1">Secreted</location>
    </subcellularLocation>
    <subcellularLocation>
        <location evidence="1">Cell surface</location>
    </subcellularLocation>
    <text evidence="1">Fractions of enolase are present in both the cytoplasm and on the cell surface.</text>
</comment>
<comment type="similarity">
    <text evidence="1">Belongs to the enolase family.</text>
</comment>
<sequence length="431" mass="46418">MSTIIDVYAREVLDSRGNPTVEVEVYTESGAFGRAIVPSGASTGEHEAVELRDGDKSRYLGKGVMNAVNNVNEAIAPEIVGFDVTDQAGIDRAMIELDGTPNKGKLGANAILGVSMAVAHAAADFVGLPLYRYLGGFNAKQLPTPMMNIINGGSHADNNVDFQEFMILPVGAPTFKESIRMGAEVFHALKAVLHDKGLNTAVGDEGGFAPNLGSNREALEVIIEAIEKAGYKAGENVFLGMDVASSEFYNKETGKYDLAGEGRTGLTSAEMVDFYEELCKDFPIISIEDGLDENDWDGHKLLTERIGDKVQLVGDDLFVTNTQKLAEGIEKGISNSILIKVNQIGTLTETFEAIEMAKRAGYTAVVSHRSGETEDATIADIAVATNAGQIKTGSMSRTDRIAKYNQLLRIEDELGEIAVYDGIKSFYNIKR</sequence>
<organism>
    <name type="scientific">Bacillus cereus (strain 03BB102)</name>
    <dbReference type="NCBI Taxonomy" id="572264"/>
    <lineage>
        <taxon>Bacteria</taxon>
        <taxon>Bacillati</taxon>
        <taxon>Bacillota</taxon>
        <taxon>Bacilli</taxon>
        <taxon>Bacillales</taxon>
        <taxon>Bacillaceae</taxon>
        <taxon>Bacillus</taxon>
        <taxon>Bacillus cereus group</taxon>
    </lineage>
</organism>
<protein>
    <recommendedName>
        <fullName evidence="1">Enolase</fullName>
        <ecNumber evidence="1">4.2.1.11</ecNumber>
    </recommendedName>
    <alternativeName>
        <fullName evidence="1">2-phospho-D-glycerate hydro-lyase</fullName>
    </alternativeName>
    <alternativeName>
        <fullName evidence="1">2-phosphoglycerate dehydratase</fullName>
    </alternativeName>
</protein>
<reference key="1">
    <citation type="submission" date="2009-02" db="EMBL/GenBank/DDBJ databases">
        <title>Genome sequence of Bacillus cereus 03BB102.</title>
        <authorList>
            <person name="Dodson R.J."/>
            <person name="Jackson P."/>
            <person name="Munk A.C."/>
            <person name="Brettin T."/>
            <person name="Bruce D."/>
            <person name="Detter C."/>
            <person name="Tapia R."/>
            <person name="Han C."/>
            <person name="Sutton G."/>
            <person name="Sims D."/>
        </authorList>
    </citation>
    <scope>NUCLEOTIDE SEQUENCE [LARGE SCALE GENOMIC DNA]</scope>
    <source>
        <strain>03BB102</strain>
    </source>
</reference>
<gene>
    <name evidence="1" type="primary">eno</name>
    <name type="ordered locus">BCA_5246</name>
</gene>
<accession>C1EZA0</accession>
<dbReference type="EC" id="4.2.1.11" evidence="1"/>
<dbReference type="EMBL" id="CP001407">
    <property type="protein sequence ID" value="ACO30641.1"/>
    <property type="molecule type" value="Genomic_DNA"/>
</dbReference>
<dbReference type="RefSeq" id="WP_000103949.1">
    <property type="nucleotide sequence ID" value="NZ_CP009318.1"/>
</dbReference>
<dbReference type="SMR" id="C1EZA0"/>
<dbReference type="GeneID" id="83638809"/>
<dbReference type="KEGG" id="bcx:BCA_5246"/>
<dbReference type="PATRIC" id="fig|572264.18.peg.5169"/>
<dbReference type="UniPathway" id="UPA00109">
    <property type="reaction ID" value="UER00187"/>
</dbReference>
<dbReference type="Proteomes" id="UP000002210">
    <property type="component" value="Chromosome"/>
</dbReference>
<dbReference type="GO" id="GO:0009986">
    <property type="term" value="C:cell surface"/>
    <property type="evidence" value="ECO:0007669"/>
    <property type="project" value="UniProtKB-SubCell"/>
</dbReference>
<dbReference type="GO" id="GO:0005576">
    <property type="term" value="C:extracellular region"/>
    <property type="evidence" value="ECO:0007669"/>
    <property type="project" value="UniProtKB-SubCell"/>
</dbReference>
<dbReference type="GO" id="GO:0000015">
    <property type="term" value="C:phosphopyruvate hydratase complex"/>
    <property type="evidence" value="ECO:0007669"/>
    <property type="project" value="InterPro"/>
</dbReference>
<dbReference type="GO" id="GO:0000287">
    <property type="term" value="F:magnesium ion binding"/>
    <property type="evidence" value="ECO:0007669"/>
    <property type="project" value="UniProtKB-UniRule"/>
</dbReference>
<dbReference type="GO" id="GO:0004634">
    <property type="term" value="F:phosphopyruvate hydratase activity"/>
    <property type="evidence" value="ECO:0007669"/>
    <property type="project" value="UniProtKB-UniRule"/>
</dbReference>
<dbReference type="GO" id="GO:0006096">
    <property type="term" value="P:glycolytic process"/>
    <property type="evidence" value="ECO:0007669"/>
    <property type="project" value="UniProtKB-UniRule"/>
</dbReference>
<dbReference type="CDD" id="cd03313">
    <property type="entry name" value="enolase"/>
    <property type="match status" value="1"/>
</dbReference>
<dbReference type="FunFam" id="3.20.20.120:FF:000001">
    <property type="entry name" value="Enolase"/>
    <property type="match status" value="1"/>
</dbReference>
<dbReference type="FunFam" id="3.30.390.10:FF:000001">
    <property type="entry name" value="Enolase"/>
    <property type="match status" value="1"/>
</dbReference>
<dbReference type="Gene3D" id="3.20.20.120">
    <property type="entry name" value="Enolase-like C-terminal domain"/>
    <property type="match status" value="1"/>
</dbReference>
<dbReference type="Gene3D" id="3.30.390.10">
    <property type="entry name" value="Enolase-like, N-terminal domain"/>
    <property type="match status" value="1"/>
</dbReference>
<dbReference type="HAMAP" id="MF_00318">
    <property type="entry name" value="Enolase"/>
    <property type="match status" value="1"/>
</dbReference>
<dbReference type="InterPro" id="IPR000941">
    <property type="entry name" value="Enolase"/>
</dbReference>
<dbReference type="InterPro" id="IPR036849">
    <property type="entry name" value="Enolase-like_C_sf"/>
</dbReference>
<dbReference type="InterPro" id="IPR029017">
    <property type="entry name" value="Enolase-like_N"/>
</dbReference>
<dbReference type="InterPro" id="IPR020810">
    <property type="entry name" value="Enolase_C"/>
</dbReference>
<dbReference type="InterPro" id="IPR020809">
    <property type="entry name" value="Enolase_CS"/>
</dbReference>
<dbReference type="InterPro" id="IPR020811">
    <property type="entry name" value="Enolase_N"/>
</dbReference>
<dbReference type="NCBIfam" id="TIGR01060">
    <property type="entry name" value="eno"/>
    <property type="match status" value="1"/>
</dbReference>
<dbReference type="PANTHER" id="PTHR11902">
    <property type="entry name" value="ENOLASE"/>
    <property type="match status" value="1"/>
</dbReference>
<dbReference type="PANTHER" id="PTHR11902:SF1">
    <property type="entry name" value="ENOLASE"/>
    <property type="match status" value="1"/>
</dbReference>
<dbReference type="Pfam" id="PF00113">
    <property type="entry name" value="Enolase_C"/>
    <property type="match status" value="1"/>
</dbReference>
<dbReference type="Pfam" id="PF03952">
    <property type="entry name" value="Enolase_N"/>
    <property type="match status" value="1"/>
</dbReference>
<dbReference type="PIRSF" id="PIRSF001400">
    <property type="entry name" value="Enolase"/>
    <property type="match status" value="1"/>
</dbReference>
<dbReference type="PRINTS" id="PR00148">
    <property type="entry name" value="ENOLASE"/>
</dbReference>
<dbReference type="SFLD" id="SFLDS00001">
    <property type="entry name" value="Enolase"/>
    <property type="match status" value="1"/>
</dbReference>
<dbReference type="SFLD" id="SFLDF00002">
    <property type="entry name" value="enolase"/>
    <property type="match status" value="1"/>
</dbReference>
<dbReference type="SMART" id="SM01192">
    <property type="entry name" value="Enolase_C"/>
    <property type="match status" value="1"/>
</dbReference>
<dbReference type="SMART" id="SM01193">
    <property type="entry name" value="Enolase_N"/>
    <property type="match status" value="1"/>
</dbReference>
<dbReference type="SUPFAM" id="SSF51604">
    <property type="entry name" value="Enolase C-terminal domain-like"/>
    <property type="match status" value="1"/>
</dbReference>
<dbReference type="SUPFAM" id="SSF54826">
    <property type="entry name" value="Enolase N-terminal domain-like"/>
    <property type="match status" value="1"/>
</dbReference>
<dbReference type="PROSITE" id="PS00164">
    <property type="entry name" value="ENOLASE"/>
    <property type="match status" value="1"/>
</dbReference>
<proteinExistence type="inferred from homology"/>
<name>ENO_BACC3</name>